<dbReference type="EC" id="3.4.24.-" evidence="1"/>
<dbReference type="EMBL" id="CP000117">
    <property type="protein sequence ID" value="ABA19714.1"/>
    <property type="molecule type" value="Genomic_DNA"/>
</dbReference>
<dbReference type="SMR" id="Q3MH22"/>
<dbReference type="KEGG" id="ava:Ava_0088"/>
<dbReference type="eggNOG" id="COG0501">
    <property type="taxonomic scope" value="Bacteria"/>
</dbReference>
<dbReference type="HOGENOM" id="CLU_042266_3_0_3"/>
<dbReference type="Proteomes" id="UP000002533">
    <property type="component" value="Chromosome"/>
</dbReference>
<dbReference type="GO" id="GO:0005886">
    <property type="term" value="C:plasma membrane"/>
    <property type="evidence" value="ECO:0007669"/>
    <property type="project" value="UniProtKB-SubCell"/>
</dbReference>
<dbReference type="GO" id="GO:0004222">
    <property type="term" value="F:metalloendopeptidase activity"/>
    <property type="evidence" value="ECO:0007669"/>
    <property type="project" value="UniProtKB-UniRule"/>
</dbReference>
<dbReference type="GO" id="GO:0008270">
    <property type="term" value="F:zinc ion binding"/>
    <property type="evidence" value="ECO:0007669"/>
    <property type="project" value="UniProtKB-UniRule"/>
</dbReference>
<dbReference type="GO" id="GO:0006508">
    <property type="term" value="P:proteolysis"/>
    <property type="evidence" value="ECO:0007669"/>
    <property type="project" value="UniProtKB-KW"/>
</dbReference>
<dbReference type="CDD" id="cd07336">
    <property type="entry name" value="M48B_HtpX_like"/>
    <property type="match status" value="1"/>
</dbReference>
<dbReference type="Gene3D" id="3.30.2010.10">
    <property type="entry name" value="Metalloproteases ('zincins'), catalytic domain"/>
    <property type="match status" value="1"/>
</dbReference>
<dbReference type="HAMAP" id="MF_00188">
    <property type="entry name" value="Pept_M48_protease_HtpX"/>
    <property type="match status" value="1"/>
</dbReference>
<dbReference type="InterPro" id="IPR050083">
    <property type="entry name" value="HtpX_protease"/>
</dbReference>
<dbReference type="InterPro" id="IPR022919">
    <property type="entry name" value="Pept_M48_protease_HtpX"/>
</dbReference>
<dbReference type="InterPro" id="IPR001915">
    <property type="entry name" value="Peptidase_M48"/>
</dbReference>
<dbReference type="PANTHER" id="PTHR43221">
    <property type="entry name" value="PROTEASE HTPX"/>
    <property type="match status" value="1"/>
</dbReference>
<dbReference type="PANTHER" id="PTHR43221:SF2">
    <property type="entry name" value="PROTEASE HTPX HOMOLOG"/>
    <property type="match status" value="1"/>
</dbReference>
<dbReference type="Pfam" id="PF01435">
    <property type="entry name" value="Peptidase_M48"/>
    <property type="match status" value="1"/>
</dbReference>
<dbReference type="PROSITE" id="PS00142">
    <property type="entry name" value="ZINC_PROTEASE"/>
    <property type="match status" value="1"/>
</dbReference>
<reference key="1">
    <citation type="journal article" date="2014" name="Stand. Genomic Sci.">
        <title>Complete genome sequence of Anabaena variabilis ATCC 29413.</title>
        <authorList>
            <person name="Thiel T."/>
            <person name="Pratte B.S."/>
            <person name="Zhong J."/>
            <person name="Goodwin L."/>
            <person name="Copeland A."/>
            <person name="Lucas S."/>
            <person name="Han C."/>
            <person name="Pitluck S."/>
            <person name="Land M.L."/>
            <person name="Kyrpides N.C."/>
            <person name="Woyke T."/>
        </authorList>
    </citation>
    <scope>NUCLEOTIDE SEQUENCE [LARGE SCALE GENOMIC DNA]</scope>
    <source>
        <strain>ATCC 29413 / PCC 7937</strain>
    </source>
</reference>
<gene>
    <name evidence="1" type="primary">htpX</name>
    <name type="ordered locus">Ava_0088</name>
</gene>
<sequence>MGNQFKTLALLAALSGLLIAISYWVIGGSSGLIIGIGLAAVTNLLSWYQSDKIALAVYRAQPVSESQAPRLYRMVQRLSQRANIPMPGVYIVPGQTANAFATGRDPEHAAVAVTEGILNILPEDELEAVIAHELTHIINRDTLTQAVAATVAGAISFLAQMVSYSLWFGGIGGRDNERGGNPLGVLLTVVLAPIAATIIQLAISRTREFSADAGSARLTGNPRALARALQRLEAAARQIPLNANPAFEPLLIINSISGQFLGNLFSSHPSTEARVQALLKLEKQLPTIA</sequence>
<keyword id="KW-0997">Cell inner membrane</keyword>
<keyword id="KW-1003">Cell membrane</keyword>
<keyword id="KW-0378">Hydrolase</keyword>
<keyword id="KW-0472">Membrane</keyword>
<keyword id="KW-0479">Metal-binding</keyword>
<keyword id="KW-0482">Metalloprotease</keyword>
<keyword id="KW-0645">Protease</keyword>
<keyword id="KW-0812">Transmembrane</keyword>
<keyword id="KW-1133">Transmembrane helix</keyword>
<keyword id="KW-0862">Zinc</keyword>
<protein>
    <recommendedName>
        <fullName evidence="1">Protease HtpX homolog</fullName>
        <ecNumber evidence="1">3.4.24.-</ecNumber>
    </recommendedName>
</protein>
<organism>
    <name type="scientific">Trichormus variabilis (strain ATCC 29413 / PCC 7937)</name>
    <name type="common">Anabaena variabilis</name>
    <dbReference type="NCBI Taxonomy" id="240292"/>
    <lineage>
        <taxon>Bacteria</taxon>
        <taxon>Bacillati</taxon>
        <taxon>Cyanobacteriota</taxon>
        <taxon>Cyanophyceae</taxon>
        <taxon>Nostocales</taxon>
        <taxon>Nostocaceae</taxon>
        <taxon>Trichormus</taxon>
    </lineage>
</organism>
<comment type="cofactor">
    <cofactor evidence="1">
        <name>Zn(2+)</name>
        <dbReference type="ChEBI" id="CHEBI:29105"/>
    </cofactor>
    <text evidence="1">Binds 1 zinc ion per subunit.</text>
</comment>
<comment type="subcellular location">
    <subcellularLocation>
        <location evidence="1">Cell inner membrane</location>
        <topology evidence="1">Multi-pass membrane protein</topology>
    </subcellularLocation>
</comment>
<comment type="similarity">
    <text evidence="1">Belongs to the peptidase M48B family.</text>
</comment>
<evidence type="ECO:0000255" key="1">
    <source>
        <dbReference type="HAMAP-Rule" id="MF_00188"/>
    </source>
</evidence>
<feature type="chain" id="PRO_1000020842" description="Protease HtpX homolog">
    <location>
        <begin position="1"/>
        <end position="289"/>
    </location>
</feature>
<feature type="transmembrane region" description="Helical" evidence="1">
    <location>
        <begin position="8"/>
        <end position="28"/>
    </location>
</feature>
<feature type="transmembrane region" description="Helical" evidence="1">
    <location>
        <begin position="29"/>
        <end position="49"/>
    </location>
</feature>
<feature type="transmembrane region" description="Helical" evidence="1">
    <location>
        <begin position="151"/>
        <end position="171"/>
    </location>
</feature>
<feature type="transmembrane region" description="Helical" evidence="1">
    <location>
        <begin position="183"/>
        <end position="203"/>
    </location>
</feature>
<feature type="active site" evidence="1">
    <location>
        <position position="133"/>
    </location>
</feature>
<feature type="binding site" evidence="1">
    <location>
        <position position="132"/>
    </location>
    <ligand>
        <name>Zn(2+)</name>
        <dbReference type="ChEBI" id="CHEBI:29105"/>
        <note>catalytic</note>
    </ligand>
</feature>
<feature type="binding site" evidence="1">
    <location>
        <position position="136"/>
    </location>
    <ligand>
        <name>Zn(2+)</name>
        <dbReference type="ChEBI" id="CHEBI:29105"/>
        <note>catalytic</note>
    </ligand>
</feature>
<feature type="binding site" evidence="1">
    <location>
        <position position="208"/>
    </location>
    <ligand>
        <name>Zn(2+)</name>
        <dbReference type="ChEBI" id="CHEBI:29105"/>
        <note>catalytic</note>
    </ligand>
</feature>
<accession>Q3MH22</accession>
<proteinExistence type="inferred from homology"/>
<name>HTPX_TRIV2</name>